<dbReference type="EC" id="3.1.5.1" evidence="1"/>
<dbReference type="EMBL" id="CP000946">
    <property type="protein sequence ID" value="ACA79113.1"/>
    <property type="molecule type" value="Genomic_DNA"/>
</dbReference>
<dbReference type="RefSeq" id="WP_000057067.1">
    <property type="nucleotide sequence ID" value="NZ_MTFT01000035.1"/>
</dbReference>
<dbReference type="SMR" id="B1IQI0"/>
<dbReference type="KEGG" id="ecl:EcolC_3499"/>
<dbReference type="HOGENOM" id="CLU_028163_2_1_6"/>
<dbReference type="GO" id="GO:0008832">
    <property type="term" value="F:dGTPase activity"/>
    <property type="evidence" value="ECO:0007669"/>
    <property type="project" value="UniProtKB-UniRule"/>
</dbReference>
<dbReference type="GO" id="GO:0000287">
    <property type="term" value="F:magnesium ion binding"/>
    <property type="evidence" value="ECO:0007669"/>
    <property type="project" value="UniProtKB-UniRule"/>
</dbReference>
<dbReference type="GO" id="GO:0006203">
    <property type="term" value="P:dGTP catabolic process"/>
    <property type="evidence" value="ECO:0007669"/>
    <property type="project" value="InterPro"/>
</dbReference>
<dbReference type="CDD" id="cd00077">
    <property type="entry name" value="HDc"/>
    <property type="match status" value="1"/>
</dbReference>
<dbReference type="FunFam" id="1.10.3210.10:FF:000009">
    <property type="entry name" value="Deoxyguanosinetriphosphate triphosphohydrolase"/>
    <property type="match status" value="1"/>
</dbReference>
<dbReference type="FunFam" id="1.10.3210.10:FF:000010">
    <property type="entry name" value="Deoxyguanosinetriphosphate triphosphohydrolase"/>
    <property type="match status" value="1"/>
</dbReference>
<dbReference type="FunFam" id="1.10.3410.10:FF:000001">
    <property type="entry name" value="Deoxyguanosinetriphosphate triphosphohydrolase"/>
    <property type="match status" value="1"/>
</dbReference>
<dbReference type="Gene3D" id="1.10.3210.10">
    <property type="entry name" value="Hypothetical protein af1432"/>
    <property type="match status" value="2"/>
</dbReference>
<dbReference type="Gene3D" id="1.10.3410.10">
    <property type="entry name" value="putative deoxyguanosinetriphosphate triphosphohydrolase like domain"/>
    <property type="match status" value="1"/>
</dbReference>
<dbReference type="HAMAP" id="MF_00030">
    <property type="entry name" value="dGTPase_type1"/>
    <property type="match status" value="1"/>
</dbReference>
<dbReference type="InterPro" id="IPR023293">
    <property type="entry name" value="dGTP_triP_hydro_central_sf"/>
</dbReference>
<dbReference type="InterPro" id="IPR006261">
    <property type="entry name" value="dGTPase"/>
</dbReference>
<dbReference type="InterPro" id="IPR050135">
    <property type="entry name" value="dGTPase-like"/>
</dbReference>
<dbReference type="InterPro" id="IPR020779">
    <property type="entry name" value="dNTPase_1"/>
</dbReference>
<dbReference type="InterPro" id="IPR003607">
    <property type="entry name" value="HD/PDEase_dom"/>
</dbReference>
<dbReference type="InterPro" id="IPR006674">
    <property type="entry name" value="HD_domain"/>
</dbReference>
<dbReference type="NCBIfam" id="TIGR01353">
    <property type="entry name" value="dGTP_triPase"/>
    <property type="match status" value="1"/>
</dbReference>
<dbReference type="NCBIfam" id="NF003429">
    <property type="entry name" value="PRK04926.1"/>
    <property type="match status" value="1"/>
</dbReference>
<dbReference type="PANTHER" id="PTHR11373:SF32">
    <property type="entry name" value="DEOXYGUANOSINETRIPHOSPHATE TRIPHOSPHOHYDROLASE"/>
    <property type="match status" value="1"/>
</dbReference>
<dbReference type="PANTHER" id="PTHR11373">
    <property type="entry name" value="DEOXYNUCLEOSIDE TRIPHOSPHATE TRIPHOSPHOHYDROLASE"/>
    <property type="match status" value="1"/>
</dbReference>
<dbReference type="Pfam" id="PF01966">
    <property type="entry name" value="HD"/>
    <property type="match status" value="1"/>
</dbReference>
<dbReference type="SMART" id="SM00471">
    <property type="entry name" value="HDc"/>
    <property type="match status" value="1"/>
</dbReference>
<dbReference type="SUPFAM" id="SSF109604">
    <property type="entry name" value="HD-domain/PDEase-like"/>
    <property type="match status" value="1"/>
</dbReference>
<dbReference type="PROSITE" id="PS51831">
    <property type="entry name" value="HD"/>
    <property type="match status" value="1"/>
</dbReference>
<proteinExistence type="inferred from homology"/>
<evidence type="ECO:0000255" key="1">
    <source>
        <dbReference type="HAMAP-Rule" id="MF_00030"/>
    </source>
</evidence>
<evidence type="ECO:0000255" key="2">
    <source>
        <dbReference type="PROSITE-ProRule" id="PRU01175"/>
    </source>
</evidence>
<organism>
    <name type="scientific">Escherichia coli (strain ATCC 8739 / DSM 1576 / NBRC 3972 / NCIMB 8545 / WDCM 00012 / Crooks)</name>
    <dbReference type="NCBI Taxonomy" id="481805"/>
    <lineage>
        <taxon>Bacteria</taxon>
        <taxon>Pseudomonadati</taxon>
        <taxon>Pseudomonadota</taxon>
        <taxon>Gammaproteobacteria</taxon>
        <taxon>Enterobacterales</taxon>
        <taxon>Enterobacteriaceae</taxon>
        <taxon>Escherichia</taxon>
    </lineage>
</organism>
<accession>B1IQI0</accession>
<keyword id="KW-0378">Hydrolase</keyword>
<keyword id="KW-0460">Magnesium</keyword>
<comment type="function">
    <text evidence="1">dGTPase preferentially hydrolyzes dGTP over the other canonical NTPs.</text>
</comment>
<comment type="catalytic activity">
    <reaction evidence="1">
        <text>dGTP + H2O = 2'-deoxyguanosine + triphosphate + H(+)</text>
        <dbReference type="Rhea" id="RHEA:15193"/>
        <dbReference type="ChEBI" id="CHEBI:15377"/>
        <dbReference type="ChEBI" id="CHEBI:15378"/>
        <dbReference type="ChEBI" id="CHEBI:17172"/>
        <dbReference type="ChEBI" id="CHEBI:18036"/>
        <dbReference type="ChEBI" id="CHEBI:61429"/>
        <dbReference type="EC" id="3.1.5.1"/>
    </reaction>
</comment>
<comment type="cofactor">
    <cofactor evidence="1">
        <name>Mg(2+)</name>
        <dbReference type="ChEBI" id="CHEBI:18420"/>
    </cofactor>
</comment>
<comment type="subunit">
    <text evidence="1">Homotetramer.</text>
</comment>
<comment type="similarity">
    <text evidence="1">Belongs to the dGTPase family. Type 1 subfamily.</text>
</comment>
<name>DGTP_ECOLC</name>
<protein>
    <recommendedName>
        <fullName evidence="1">Deoxyguanosinetriphosphate triphosphohydrolase</fullName>
        <shortName evidence="1">dGTP triphosphohydrolase</shortName>
        <shortName evidence="1">dGTPase</shortName>
        <ecNumber evidence="1">3.1.5.1</ecNumber>
    </recommendedName>
</protein>
<reference key="1">
    <citation type="submission" date="2008-02" db="EMBL/GenBank/DDBJ databases">
        <title>Complete sequence of Escherichia coli C str. ATCC 8739.</title>
        <authorList>
            <person name="Copeland A."/>
            <person name="Lucas S."/>
            <person name="Lapidus A."/>
            <person name="Glavina del Rio T."/>
            <person name="Dalin E."/>
            <person name="Tice H."/>
            <person name="Bruce D."/>
            <person name="Goodwin L."/>
            <person name="Pitluck S."/>
            <person name="Kiss H."/>
            <person name="Brettin T."/>
            <person name="Detter J.C."/>
            <person name="Han C."/>
            <person name="Kuske C.R."/>
            <person name="Schmutz J."/>
            <person name="Larimer F."/>
            <person name="Land M."/>
            <person name="Hauser L."/>
            <person name="Kyrpides N."/>
            <person name="Mikhailova N."/>
            <person name="Ingram L."/>
            <person name="Richardson P."/>
        </authorList>
    </citation>
    <scope>NUCLEOTIDE SEQUENCE [LARGE SCALE GENOMIC DNA]</scope>
    <source>
        <strain>ATCC 8739 / DSM 1576 / NBRC 3972 / NCIMB 8545 / WDCM 00012 / Crooks</strain>
    </source>
</reference>
<feature type="chain" id="PRO_1000074405" description="Deoxyguanosinetriphosphate triphosphohydrolase">
    <location>
        <begin position="1"/>
        <end position="505"/>
    </location>
</feature>
<feature type="domain" description="HD" evidence="2">
    <location>
        <begin position="66"/>
        <end position="273"/>
    </location>
</feature>
<gene>
    <name evidence="1" type="primary">dgt</name>
    <name type="ordered locus">EcolC_3499</name>
</gene>
<sequence length="505" mass="59355">MAQIDFRKKINWHRRYRSPQGVKTEHEILRIFESDRGRIINSPAIRRLQQKTQVFPLERNAAVRTRLTHSMEVQQVGRYIAKEILSRLKELKLLEAYGLDELTGPFESIVEMSCLMHDIGNPPFGHFGEAAINDWFRQRLHPEDAESQPLTDDRCSVAALRLRDGEEPLNELRRKIRQDLCHFEGNAQGIRLVHTLMRMNLTWAQVGGILKYTRPAWWRGETPETHHYLMKKPGYYLSEEAYIARLRKELNLALYSRFPLTWIMEAADDISYCVADLEDAVEKRIFTVEQLYHHLHEAWGQHEKGSLFSLVVENAWEKSRSNSLSRSTEDQFFMYLRVNTLNKLVPYAAQRFIDNLPAIFAGTFNHALLEDASECSDLLKLYKNVAVKHVFSHPDVEQLELQGYRVISGLLEIYRPLLSLSLSDFTELVEKERVKRFPIESRLFHKLSTRHRLAYVEAVSKLPSDSPEFPLWEYYYRCRLLQDYISGMTDLYAWDEYRRLMAVEQ</sequence>